<sequence>MVMTDPIADFLTRIRNANMVKHDKLELPASKIKKEIAEILKREGFIRDVEYIEDDNAGTIRVFLKYGATGERVITGLKRISKPGLRVYAKSTEVPKVLNGLGIAIVSTSQGVLTDKEARAKQVGGEVLAYVW</sequence>
<comment type="function">
    <text evidence="1">One of the primary rRNA binding proteins, it binds directly to 16S rRNA central domain where it helps coordinate assembly of the platform of the 30S subunit.</text>
</comment>
<comment type="subunit">
    <text evidence="1">Part of the 30S ribosomal subunit. Contacts proteins S5 and S12.</text>
</comment>
<comment type="similarity">
    <text evidence="1">Belongs to the universal ribosomal protein uS8 family.</text>
</comment>
<protein>
    <recommendedName>
        <fullName evidence="1">Small ribosomal subunit protein uS8</fullName>
    </recommendedName>
    <alternativeName>
        <fullName evidence="2">30S ribosomal protein S8</fullName>
    </alternativeName>
</protein>
<organism>
    <name type="scientific">Listeria monocytogenes serovar 1/2a (strain ATCC BAA-679 / EGD-e)</name>
    <dbReference type="NCBI Taxonomy" id="169963"/>
    <lineage>
        <taxon>Bacteria</taxon>
        <taxon>Bacillati</taxon>
        <taxon>Bacillota</taxon>
        <taxon>Bacilli</taxon>
        <taxon>Bacillales</taxon>
        <taxon>Listeriaceae</taxon>
        <taxon>Listeria</taxon>
    </lineage>
</organism>
<dbReference type="EMBL" id="AL591983">
    <property type="protein sequence ID" value="CAD00696.1"/>
    <property type="molecule type" value="Genomic_DNA"/>
</dbReference>
<dbReference type="PIR" id="AB1402">
    <property type="entry name" value="AB1402"/>
</dbReference>
<dbReference type="RefSeq" id="NP_466141.1">
    <property type="nucleotide sequence ID" value="NC_003210.1"/>
</dbReference>
<dbReference type="RefSeq" id="WP_003720937.1">
    <property type="nucleotide sequence ID" value="NZ_CP149495.1"/>
</dbReference>
<dbReference type="PDB" id="7NHN">
    <property type="method" value="EM"/>
    <property type="resolution" value="2.90 A"/>
    <property type="chains" value="i=1-132"/>
</dbReference>
<dbReference type="PDBsum" id="7NHN"/>
<dbReference type="EMDB" id="EMD-12334"/>
<dbReference type="SMR" id="P66623"/>
<dbReference type="STRING" id="169963.gene:17595336"/>
<dbReference type="PaxDb" id="169963-lmo2618"/>
<dbReference type="EnsemblBacteria" id="CAD00696">
    <property type="protein sequence ID" value="CAD00696"/>
    <property type="gene ID" value="CAD00696"/>
</dbReference>
<dbReference type="GeneID" id="93240499"/>
<dbReference type="GeneID" id="987195"/>
<dbReference type="KEGG" id="lmo:lmo2618"/>
<dbReference type="PATRIC" id="fig|169963.11.peg.2682"/>
<dbReference type="eggNOG" id="COG0096">
    <property type="taxonomic scope" value="Bacteria"/>
</dbReference>
<dbReference type="HOGENOM" id="CLU_098428_0_2_9"/>
<dbReference type="OrthoDB" id="9802617at2"/>
<dbReference type="PhylomeDB" id="P66623"/>
<dbReference type="BioCyc" id="LMON169963:LMO2618-MONOMER"/>
<dbReference type="Proteomes" id="UP000000817">
    <property type="component" value="Chromosome"/>
</dbReference>
<dbReference type="GO" id="GO:0022627">
    <property type="term" value="C:cytosolic small ribosomal subunit"/>
    <property type="evidence" value="ECO:0000318"/>
    <property type="project" value="GO_Central"/>
</dbReference>
<dbReference type="GO" id="GO:0019843">
    <property type="term" value="F:rRNA binding"/>
    <property type="evidence" value="ECO:0007669"/>
    <property type="project" value="UniProtKB-UniRule"/>
</dbReference>
<dbReference type="GO" id="GO:0003735">
    <property type="term" value="F:structural constituent of ribosome"/>
    <property type="evidence" value="ECO:0000318"/>
    <property type="project" value="GO_Central"/>
</dbReference>
<dbReference type="GO" id="GO:0006412">
    <property type="term" value="P:translation"/>
    <property type="evidence" value="ECO:0007669"/>
    <property type="project" value="UniProtKB-UniRule"/>
</dbReference>
<dbReference type="FunFam" id="3.30.1370.30:FF:000002">
    <property type="entry name" value="30S ribosomal protein S8"/>
    <property type="match status" value="1"/>
</dbReference>
<dbReference type="FunFam" id="3.30.1490.10:FF:000001">
    <property type="entry name" value="30S ribosomal protein S8"/>
    <property type="match status" value="1"/>
</dbReference>
<dbReference type="Gene3D" id="3.30.1370.30">
    <property type="match status" value="1"/>
</dbReference>
<dbReference type="Gene3D" id="3.30.1490.10">
    <property type="match status" value="1"/>
</dbReference>
<dbReference type="HAMAP" id="MF_01302_B">
    <property type="entry name" value="Ribosomal_uS8_B"/>
    <property type="match status" value="1"/>
</dbReference>
<dbReference type="InterPro" id="IPR000630">
    <property type="entry name" value="Ribosomal_uS8"/>
</dbReference>
<dbReference type="InterPro" id="IPR047863">
    <property type="entry name" value="Ribosomal_uS8_CS"/>
</dbReference>
<dbReference type="InterPro" id="IPR035987">
    <property type="entry name" value="Ribosomal_uS8_sf"/>
</dbReference>
<dbReference type="NCBIfam" id="NF001109">
    <property type="entry name" value="PRK00136.1"/>
    <property type="match status" value="1"/>
</dbReference>
<dbReference type="PANTHER" id="PTHR11758">
    <property type="entry name" value="40S RIBOSOMAL PROTEIN S15A"/>
    <property type="match status" value="1"/>
</dbReference>
<dbReference type="Pfam" id="PF00410">
    <property type="entry name" value="Ribosomal_S8"/>
    <property type="match status" value="1"/>
</dbReference>
<dbReference type="SUPFAM" id="SSF56047">
    <property type="entry name" value="Ribosomal protein S8"/>
    <property type="match status" value="1"/>
</dbReference>
<dbReference type="PROSITE" id="PS00053">
    <property type="entry name" value="RIBOSOMAL_S8"/>
    <property type="match status" value="1"/>
</dbReference>
<name>RS8_LISMO</name>
<proteinExistence type="evidence at protein level"/>
<keyword id="KW-0002">3D-structure</keyword>
<keyword id="KW-1185">Reference proteome</keyword>
<keyword id="KW-0687">Ribonucleoprotein</keyword>
<keyword id="KW-0689">Ribosomal protein</keyword>
<keyword id="KW-0694">RNA-binding</keyword>
<keyword id="KW-0699">rRNA-binding</keyword>
<evidence type="ECO:0000255" key="1">
    <source>
        <dbReference type="HAMAP-Rule" id="MF_01302"/>
    </source>
</evidence>
<evidence type="ECO:0000305" key="2"/>
<gene>
    <name evidence="1" type="primary">rpsH</name>
    <name type="ordered locus">lmo2618</name>
</gene>
<feature type="chain" id="PRO_0000126431" description="Small ribosomal subunit protein uS8">
    <location>
        <begin position="1"/>
        <end position="132"/>
    </location>
</feature>
<reference key="1">
    <citation type="journal article" date="2001" name="Science">
        <title>Comparative genomics of Listeria species.</title>
        <authorList>
            <person name="Glaser P."/>
            <person name="Frangeul L."/>
            <person name="Buchrieser C."/>
            <person name="Rusniok C."/>
            <person name="Amend A."/>
            <person name="Baquero F."/>
            <person name="Berche P."/>
            <person name="Bloecker H."/>
            <person name="Brandt P."/>
            <person name="Chakraborty T."/>
            <person name="Charbit A."/>
            <person name="Chetouani F."/>
            <person name="Couve E."/>
            <person name="de Daruvar A."/>
            <person name="Dehoux P."/>
            <person name="Domann E."/>
            <person name="Dominguez-Bernal G."/>
            <person name="Duchaud E."/>
            <person name="Durant L."/>
            <person name="Dussurget O."/>
            <person name="Entian K.-D."/>
            <person name="Fsihi H."/>
            <person name="Garcia-del Portillo F."/>
            <person name="Garrido P."/>
            <person name="Gautier L."/>
            <person name="Goebel W."/>
            <person name="Gomez-Lopez N."/>
            <person name="Hain T."/>
            <person name="Hauf J."/>
            <person name="Jackson D."/>
            <person name="Jones L.-M."/>
            <person name="Kaerst U."/>
            <person name="Kreft J."/>
            <person name="Kuhn M."/>
            <person name="Kunst F."/>
            <person name="Kurapkat G."/>
            <person name="Madueno E."/>
            <person name="Maitournam A."/>
            <person name="Mata Vicente J."/>
            <person name="Ng E."/>
            <person name="Nedjari H."/>
            <person name="Nordsiek G."/>
            <person name="Novella S."/>
            <person name="de Pablos B."/>
            <person name="Perez-Diaz J.-C."/>
            <person name="Purcell R."/>
            <person name="Remmel B."/>
            <person name="Rose M."/>
            <person name="Schlueter T."/>
            <person name="Simoes N."/>
            <person name="Tierrez A."/>
            <person name="Vazquez-Boland J.-A."/>
            <person name="Voss H."/>
            <person name="Wehland J."/>
            <person name="Cossart P."/>
        </authorList>
    </citation>
    <scope>NUCLEOTIDE SEQUENCE [LARGE SCALE GENOMIC DNA]</scope>
    <source>
        <strain>ATCC BAA-679 / EGD-e</strain>
    </source>
</reference>
<accession>P66623</accession>
<accession>Q927M1</accession>